<sequence>MMKAILATLAIFGCIWPGQSVMFHLTPNTQKCLKEDIQANQMVMGEYEVSDVPGQVIDFIVRDTKGHILSQKEHITKAKFSFMSEVYDSYEICFISKVPPHQRGIAQQVALTTKKGVETKNYEGIGEASKLKPLEVDLKRLEDLSDSIVRDFVMMRKREEEMRDTNEKTNSRVLFFSIFSMCCLLGLATWQVLYLRRYFKAKKLIE</sequence>
<evidence type="ECO:0000250" key="1"/>
<evidence type="ECO:0000250" key="2">
    <source>
        <dbReference type="UniProtKB" id="Q8SXY6"/>
    </source>
</evidence>
<evidence type="ECO:0000255" key="3"/>
<evidence type="ECO:0000255" key="4">
    <source>
        <dbReference type="PROSITE-ProRule" id="PRU00096"/>
    </source>
</evidence>
<evidence type="ECO:0000312" key="5">
    <source>
        <dbReference type="EMBL" id="EDW84883.1"/>
    </source>
</evidence>
<accession>B4NIY1</accession>
<gene>
    <name evidence="2" type="primary">bai</name>
    <name type="ORF">GK14360</name>
</gene>
<keyword id="KW-0217">Developmental protein</keyword>
<keyword id="KW-0472">Membrane</keyword>
<keyword id="KW-1185">Reference proteome</keyword>
<keyword id="KW-0732">Signal</keyword>
<keyword id="KW-0812">Transmembrane</keyword>
<keyword id="KW-1133">Transmembrane helix</keyword>
<organism>
    <name type="scientific">Drosophila willistoni</name>
    <name type="common">Fruit fly</name>
    <dbReference type="NCBI Taxonomy" id="7260"/>
    <lineage>
        <taxon>Eukaryota</taxon>
        <taxon>Metazoa</taxon>
        <taxon>Ecdysozoa</taxon>
        <taxon>Arthropoda</taxon>
        <taxon>Hexapoda</taxon>
        <taxon>Insecta</taxon>
        <taxon>Pterygota</taxon>
        <taxon>Neoptera</taxon>
        <taxon>Endopterygota</taxon>
        <taxon>Diptera</taxon>
        <taxon>Brachycera</taxon>
        <taxon>Muscomorpha</taxon>
        <taxon>Ephydroidea</taxon>
        <taxon>Drosophilidae</taxon>
        <taxon>Drosophila</taxon>
        <taxon>Sophophora</taxon>
    </lineage>
</organism>
<reference evidence="5" key="1">
    <citation type="journal article" date="2007" name="Nature">
        <title>Evolution of genes and genomes on the Drosophila phylogeny.</title>
        <authorList>
            <consortium name="Drosophila 12 genomes consortium"/>
        </authorList>
    </citation>
    <scope>NUCLEOTIDE SEQUENCE [LARGE SCALE GENOMIC DNA]</scope>
    <source>
        <strain evidence="5">Tucson 14030-0811.24</strain>
    </source>
</reference>
<protein>
    <recommendedName>
        <fullName evidence="2">Transmembrane emp24 domain-containing protein bai</fullName>
    </recommendedName>
</protein>
<dbReference type="EMBL" id="CH964272">
    <property type="protein sequence ID" value="EDW84883.1"/>
    <property type="molecule type" value="Genomic_DNA"/>
</dbReference>
<dbReference type="SMR" id="B4NIY1"/>
<dbReference type="STRING" id="7260.B4NIY1"/>
<dbReference type="EnsemblMetazoa" id="FBtr0245011">
    <property type="protein sequence ID" value="FBpp0243503"/>
    <property type="gene ID" value="FBgn0216366"/>
</dbReference>
<dbReference type="EnsemblMetazoa" id="XM_002073861.4">
    <property type="protein sequence ID" value="XP_002073897.1"/>
    <property type="gene ID" value="LOC6650846"/>
</dbReference>
<dbReference type="GeneID" id="6650846"/>
<dbReference type="KEGG" id="dwi:6650846"/>
<dbReference type="CTD" id="42996"/>
<dbReference type="eggNOG" id="KOG1691">
    <property type="taxonomic scope" value="Eukaryota"/>
</dbReference>
<dbReference type="HOGENOM" id="CLU_066963_3_1_1"/>
<dbReference type="OMA" id="TKDFAFM"/>
<dbReference type="OrthoDB" id="759142at2759"/>
<dbReference type="PhylomeDB" id="B4NIY1"/>
<dbReference type="ChiTaRS" id="bai">
    <property type="organism name" value="fly"/>
</dbReference>
<dbReference type="Proteomes" id="UP000007798">
    <property type="component" value="Unassembled WGS sequence"/>
</dbReference>
<dbReference type="GO" id="GO:0005737">
    <property type="term" value="C:cytoplasm"/>
    <property type="evidence" value="ECO:0007669"/>
    <property type="project" value="GOC"/>
</dbReference>
<dbReference type="GO" id="GO:0016020">
    <property type="term" value="C:membrane"/>
    <property type="evidence" value="ECO:0007669"/>
    <property type="project" value="UniProtKB-SubCell"/>
</dbReference>
<dbReference type="GO" id="GO:0038024">
    <property type="term" value="F:cargo receptor activity"/>
    <property type="evidence" value="ECO:0007669"/>
    <property type="project" value="EnsemblMetazoa"/>
</dbReference>
<dbReference type="GO" id="GO:0009953">
    <property type="term" value="P:dorsal/ventral pattern formation"/>
    <property type="evidence" value="ECO:0000250"/>
    <property type="project" value="UniProtKB"/>
</dbReference>
<dbReference type="GO" id="GO:0006888">
    <property type="term" value="P:endoplasmic reticulum to Golgi vesicle-mediated transport"/>
    <property type="evidence" value="ECO:0007669"/>
    <property type="project" value="EnsemblMetazoa"/>
</dbReference>
<dbReference type="InterPro" id="IPR015720">
    <property type="entry name" value="Emp24-like"/>
</dbReference>
<dbReference type="InterPro" id="IPR009038">
    <property type="entry name" value="GOLD_dom"/>
</dbReference>
<dbReference type="PANTHER" id="PTHR22811">
    <property type="entry name" value="TRANSMEMBRANE EMP24 DOMAIN-CONTAINING PROTEIN"/>
    <property type="match status" value="1"/>
</dbReference>
<dbReference type="Pfam" id="PF01105">
    <property type="entry name" value="EMP24_GP25L"/>
    <property type="match status" value="1"/>
</dbReference>
<dbReference type="SMART" id="SM01190">
    <property type="entry name" value="EMP24_GP25L"/>
    <property type="match status" value="1"/>
</dbReference>
<dbReference type="PROSITE" id="PS50866">
    <property type="entry name" value="GOLD"/>
    <property type="match status" value="1"/>
</dbReference>
<feature type="signal peptide" evidence="3">
    <location>
        <begin position="1"/>
        <end position="20"/>
    </location>
</feature>
<feature type="chain" id="PRO_0000393922" description="Transmembrane emp24 domain-containing protein bai" evidence="3">
    <location>
        <begin position="21"/>
        <end position="206"/>
    </location>
</feature>
<feature type="topological domain" description="Lumenal" evidence="3">
    <location>
        <begin position="21"/>
        <end position="172"/>
    </location>
</feature>
<feature type="transmembrane region" description="Helical" evidence="3">
    <location>
        <begin position="173"/>
        <end position="193"/>
    </location>
</feature>
<feature type="topological domain" description="Cytoplasmic" evidence="3">
    <location>
        <begin position="194"/>
        <end position="206"/>
    </location>
</feature>
<feature type="domain" description="GOLD" evidence="4">
    <location>
        <begin position="30"/>
        <end position="140"/>
    </location>
</feature>
<name>TMEDA_DROWI</name>
<proteinExistence type="inferred from homology"/>
<comment type="function">
    <text evidence="2">Eca and bai are essential, though not redundant, for dorsoventral patterning of the embryo. Specifically required during early embryogenesis for the activity of maternal tkv, while the zygotic tkv is not affected (By similarity).</text>
</comment>
<comment type="subcellular location">
    <subcellularLocation>
        <location evidence="1">Membrane</location>
        <topology evidence="3">Single-pass type I membrane protein</topology>
    </subcellularLocation>
</comment>
<comment type="similarity">
    <text evidence="3">Belongs to the EMP24/GP25L family.</text>
</comment>